<protein>
    <recommendedName>
        <fullName evidence="1">Flagellar assembly factor FliW</fullName>
    </recommendedName>
</protein>
<accession>A8FHX4</accession>
<reference key="1">
    <citation type="journal article" date="2007" name="PLoS ONE">
        <title>Paradoxical DNA repair and peroxide resistance gene conservation in Bacillus pumilus SAFR-032.</title>
        <authorList>
            <person name="Gioia J."/>
            <person name="Yerrapragada S."/>
            <person name="Qin X."/>
            <person name="Jiang H."/>
            <person name="Igboeli O.C."/>
            <person name="Muzny D."/>
            <person name="Dugan-Rocha S."/>
            <person name="Ding Y."/>
            <person name="Hawes A."/>
            <person name="Liu W."/>
            <person name="Perez L."/>
            <person name="Kovar C."/>
            <person name="Dinh H."/>
            <person name="Lee S."/>
            <person name="Nazareth L."/>
            <person name="Blyth P."/>
            <person name="Holder M."/>
            <person name="Buhay C."/>
            <person name="Tirumalai M.R."/>
            <person name="Liu Y."/>
            <person name="Dasgupta I."/>
            <person name="Bokhetache L."/>
            <person name="Fujita M."/>
            <person name="Karouia F."/>
            <person name="Eswara Moorthy P."/>
            <person name="Siefert J."/>
            <person name="Uzman A."/>
            <person name="Buzumbo P."/>
            <person name="Verma A."/>
            <person name="Zwiya H."/>
            <person name="McWilliams B.D."/>
            <person name="Olowu A."/>
            <person name="Clinkenbeard K.D."/>
            <person name="Newcombe D."/>
            <person name="Golebiewski L."/>
            <person name="Petrosino J.F."/>
            <person name="Nicholson W.L."/>
            <person name="Fox G.E."/>
            <person name="Venkateswaran K."/>
            <person name="Highlander S.K."/>
            <person name="Weinstock G.M."/>
        </authorList>
    </citation>
    <scope>NUCLEOTIDE SEQUENCE [LARGE SCALE GENOMIC DNA]</scope>
    <source>
        <strain>SAFR-032</strain>
    </source>
</reference>
<organism>
    <name type="scientific">Bacillus pumilus (strain SAFR-032)</name>
    <dbReference type="NCBI Taxonomy" id="315750"/>
    <lineage>
        <taxon>Bacteria</taxon>
        <taxon>Bacillati</taxon>
        <taxon>Bacillota</taxon>
        <taxon>Bacilli</taxon>
        <taxon>Bacillales</taxon>
        <taxon>Bacillaceae</taxon>
        <taxon>Bacillus</taxon>
    </lineage>
</organism>
<comment type="function">
    <text evidence="1">Acts as an anti-CsrA protein, binds CsrA and prevents it from repressing translation of its target genes, one of which is flagellin. Binds to flagellin and participates in the assembly of the flagellum.</text>
</comment>
<comment type="subunit">
    <text evidence="1">Interacts with translational regulator CsrA and flagellin(s).</text>
</comment>
<comment type="subcellular location">
    <subcellularLocation>
        <location evidence="1">Cytoplasm</location>
    </subcellularLocation>
</comment>
<comment type="similarity">
    <text evidence="1">Belongs to the FliW family.</text>
</comment>
<feature type="chain" id="PRO_1000065808" description="Flagellar assembly factor FliW">
    <location>
        <begin position="1"/>
        <end position="144"/>
    </location>
</feature>
<proteinExistence type="inferred from homology"/>
<gene>
    <name evidence="1" type="primary">fliW</name>
    <name type="ordered locus">BPUM_3187</name>
</gene>
<dbReference type="EMBL" id="CP000813">
    <property type="protein sequence ID" value="ABV63841.1"/>
    <property type="molecule type" value="Genomic_DNA"/>
</dbReference>
<dbReference type="RefSeq" id="WP_012011424.1">
    <property type="nucleotide sequence ID" value="NZ_VEIS01000025.1"/>
</dbReference>
<dbReference type="SMR" id="A8FHX4"/>
<dbReference type="STRING" id="315750.BPUM_3187"/>
<dbReference type="GeneID" id="5622478"/>
<dbReference type="KEGG" id="bpu:BPUM_3187"/>
<dbReference type="eggNOG" id="COG1699">
    <property type="taxonomic scope" value="Bacteria"/>
</dbReference>
<dbReference type="HOGENOM" id="CLU_112356_0_2_9"/>
<dbReference type="OrthoDB" id="9801235at2"/>
<dbReference type="Proteomes" id="UP000001355">
    <property type="component" value="Chromosome"/>
</dbReference>
<dbReference type="GO" id="GO:0005737">
    <property type="term" value="C:cytoplasm"/>
    <property type="evidence" value="ECO:0007669"/>
    <property type="project" value="UniProtKB-SubCell"/>
</dbReference>
<dbReference type="GO" id="GO:0044780">
    <property type="term" value="P:bacterial-type flagellum assembly"/>
    <property type="evidence" value="ECO:0007669"/>
    <property type="project" value="UniProtKB-UniRule"/>
</dbReference>
<dbReference type="GO" id="GO:0006417">
    <property type="term" value="P:regulation of translation"/>
    <property type="evidence" value="ECO:0007669"/>
    <property type="project" value="UniProtKB-KW"/>
</dbReference>
<dbReference type="Gene3D" id="2.30.290.10">
    <property type="entry name" value="BH3618-like"/>
    <property type="match status" value="1"/>
</dbReference>
<dbReference type="HAMAP" id="MF_01185">
    <property type="entry name" value="FliW"/>
    <property type="match status" value="1"/>
</dbReference>
<dbReference type="InterPro" id="IPR003775">
    <property type="entry name" value="Flagellar_assembly_factor_FliW"/>
</dbReference>
<dbReference type="InterPro" id="IPR024046">
    <property type="entry name" value="Flagellar_assmbl_FliW_dom_sf"/>
</dbReference>
<dbReference type="NCBIfam" id="NF009793">
    <property type="entry name" value="PRK13285.1-1"/>
    <property type="match status" value="1"/>
</dbReference>
<dbReference type="PANTHER" id="PTHR39190">
    <property type="entry name" value="FLAGELLAR ASSEMBLY FACTOR FLIW"/>
    <property type="match status" value="1"/>
</dbReference>
<dbReference type="PANTHER" id="PTHR39190:SF1">
    <property type="entry name" value="FLAGELLAR ASSEMBLY FACTOR FLIW"/>
    <property type="match status" value="1"/>
</dbReference>
<dbReference type="Pfam" id="PF02623">
    <property type="entry name" value="FliW"/>
    <property type="match status" value="1"/>
</dbReference>
<dbReference type="SUPFAM" id="SSF141457">
    <property type="entry name" value="BH3618-like"/>
    <property type="match status" value="1"/>
</dbReference>
<evidence type="ECO:0000255" key="1">
    <source>
        <dbReference type="HAMAP-Rule" id="MF_01185"/>
    </source>
</evidence>
<keyword id="KW-1005">Bacterial flagellum biogenesis</keyword>
<keyword id="KW-0143">Chaperone</keyword>
<keyword id="KW-0963">Cytoplasm</keyword>
<keyword id="KW-0810">Translation regulation</keyword>
<sequence>MIIQTKYHGEVKIKEEQMINFSNGIPGFLDQKQFVILPLSEESPFLVLQSLKNAELGFIVSSPFLFFNQYEFDLDETVVEILEVEDANDVEVMVILTMESSIEKTTANLRAPIIVNRKNMKAKQVILHDSAYHTKHLLEVASSC</sequence>
<name>FLIW_BACP2</name>